<comment type="function">
    <text evidence="4 5 6 7 11 12">Involved in the recombinational repair of double-strand breaks (DSB) in DNA during mitosis and meiosis. Has DNA dependent ATPase activity. Promotes D-loop (displacement loop) formation with RAD51 recombinase. Modifies the topology of double-stranded DNA during the D-loop reaction to facilitate the invasion of the homologous duplex molecule by the initiating single-stranded DNA substrate. Required for adaptation from G2/M checkpoint arrest induced by a double strand break, by participating in monitoring the extent of single-stranded DNA produced by resection of DNA ends. This role is distinct from its roles in recombination. Promotes colocalization of RAD51 and DMC1 during meiotic recombination. Involved in crossover interference.</text>
</comment>
<comment type="catalytic activity">
    <reaction evidence="4">
        <text>ATP + H2O = ADP + phosphate + H(+)</text>
        <dbReference type="Rhea" id="RHEA:13065"/>
        <dbReference type="ChEBI" id="CHEBI:15377"/>
        <dbReference type="ChEBI" id="CHEBI:15378"/>
        <dbReference type="ChEBI" id="CHEBI:30616"/>
        <dbReference type="ChEBI" id="CHEBI:43474"/>
        <dbReference type="ChEBI" id="CHEBI:456216"/>
        <dbReference type="EC" id="3.6.4.12"/>
    </reaction>
</comment>
<comment type="subunit">
    <text evidence="4 10">Interacts with RAD51 and DMC1.</text>
</comment>
<comment type="subcellular location">
    <subcellularLocation>
        <location evidence="8">Nucleus</location>
    </subcellularLocation>
</comment>
<comment type="miscellaneous">
    <text evidence="9">Present with 1270 molecules/cell in log phase SD medium.</text>
</comment>
<comment type="similarity">
    <text evidence="13">Belongs to the SNF2/RAD54 helicase family.</text>
</comment>
<comment type="caution">
    <text evidence="13">It is uncertain whether Met-1 or Met-35 is the initiator. In many S.cerevisiae strains, it is not possible to extend the sequence at the N-terminus beyond Met-35 because of a frameshift in the upstream sequence when compared to strain S288c. However, experimental evidence indicates that the longer protein is made in S288c.</text>
</comment>
<accession>P38086</accession>
<accession>D6VQ73</accession>
<reference key="1">
    <citation type="journal article" date="1994" name="Yeast">
        <title>Sequence analysis of a 31 kb DNA fragment from the right arm of Saccharomyces cerevisiae chromosome II.</title>
        <authorList>
            <person name="van der Aart Q.J.M."/>
            <person name="Barthe C."/>
            <person name="Doignon F."/>
            <person name="Aigle M."/>
            <person name="Crouzet M."/>
            <person name="Steensma H.Y."/>
        </authorList>
    </citation>
    <scope>NUCLEOTIDE SEQUENCE [GENOMIC DNA]</scope>
    <source>
        <strain>ATCC 204508 / S288c</strain>
    </source>
</reference>
<reference key="2">
    <citation type="journal article" date="1994" name="EMBO J.">
        <title>Complete DNA sequence of yeast chromosome II.</title>
        <authorList>
            <person name="Feldmann H."/>
            <person name="Aigle M."/>
            <person name="Aljinovic G."/>
            <person name="Andre B."/>
            <person name="Baclet M.C."/>
            <person name="Barthe C."/>
            <person name="Baur A."/>
            <person name="Becam A.-M."/>
            <person name="Biteau N."/>
            <person name="Boles E."/>
            <person name="Brandt T."/>
            <person name="Brendel M."/>
            <person name="Brueckner M."/>
            <person name="Bussereau F."/>
            <person name="Christiansen C."/>
            <person name="Contreras R."/>
            <person name="Crouzet M."/>
            <person name="Cziepluch C."/>
            <person name="Demolis N."/>
            <person name="Delaveau T."/>
            <person name="Doignon F."/>
            <person name="Domdey H."/>
            <person name="Duesterhus S."/>
            <person name="Dubois E."/>
            <person name="Dujon B."/>
            <person name="El Bakkoury M."/>
            <person name="Entian K.-D."/>
            <person name="Feuermann M."/>
            <person name="Fiers W."/>
            <person name="Fobo G.M."/>
            <person name="Fritz C."/>
            <person name="Gassenhuber J."/>
            <person name="Glansdorff N."/>
            <person name="Goffeau A."/>
            <person name="Grivell L.A."/>
            <person name="de Haan M."/>
            <person name="Hein C."/>
            <person name="Herbert C.J."/>
            <person name="Hollenberg C.P."/>
            <person name="Holmstroem K."/>
            <person name="Jacq C."/>
            <person name="Jacquet M."/>
            <person name="Jauniaux J.-C."/>
            <person name="Jonniaux J.-L."/>
            <person name="Kallesoee T."/>
            <person name="Kiesau P."/>
            <person name="Kirchrath L."/>
            <person name="Koetter P."/>
            <person name="Korol S."/>
            <person name="Liebl S."/>
            <person name="Logghe M."/>
            <person name="Lohan A.J.E."/>
            <person name="Louis E.J."/>
            <person name="Li Z.Y."/>
            <person name="Maat M.J."/>
            <person name="Mallet L."/>
            <person name="Mannhaupt G."/>
            <person name="Messenguy F."/>
            <person name="Miosga T."/>
            <person name="Molemans F."/>
            <person name="Mueller S."/>
            <person name="Nasr F."/>
            <person name="Obermaier B."/>
            <person name="Perea J."/>
            <person name="Pierard A."/>
            <person name="Piravandi E."/>
            <person name="Pohl F.M."/>
            <person name="Pohl T.M."/>
            <person name="Potier S."/>
            <person name="Proft M."/>
            <person name="Purnelle B."/>
            <person name="Ramezani Rad M."/>
            <person name="Rieger M."/>
            <person name="Rose M."/>
            <person name="Schaaff-Gerstenschlaeger I."/>
            <person name="Scherens B."/>
            <person name="Schwarzlose C."/>
            <person name="Skala J."/>
            <person name="Slonimski P.P."/>
            <person name="Smits P.H.M."/>
            <person name="Souciet J.-L."/>
            <person name="Steensma H.Y."/>
            <person name="Stucka R."/>
            <person name="Urrestarazu L.A."/>
            <person name="van der Aart Q.J.M."/>
            <person name="Van Dyck L."/>
            <person name="Vassarotti A."/>
            <person name="Vetter I."/>
            <person name="Vierendeels F."/>
            <person name="Vissers S."/>
            <person name="Wagner G."/>
            <person name="de Wergifosse P."/>
            <person name="Wolfe K.H."/>
            <person name="Zagulski M."/>
            <person name="Zimmermann F.K."/>
            <person name="Mewes H.-W."/>
            <person name="Kleine K."/>
        </authorList>
    </citation>
    <scope>NUCLEOTIDE SEQUENCE [LARGE SCALE GENOMIC DNA]</scope>
    <source>
        <strain>ATCC 204508 / S288c</strain>
    </source>
</reference>
<reference key="3">
    <citation type="journal article" date="2014" name="G3 (Bethesda)">
        <title>The reference genome sequence of Saccharomyces cerevisiae: Then and now.</title>
        <authorList>
            <person name="Engel S.R."/>
            <person name="Dietrich F.S."/>
            <person name="Fisk D.G."/>
            <person name="Binkley G."/>
            <person name="Balakrishnan R."/>
            <person name="Costanzo M.C."/>
            <person name="Dwight S.S."/>
            <person name="Hitz B.C."/>
            <person name="Karra K."/>
            <person name="Nash R.S."/>
            <person name="Weng S."/>
            <person name="Wong E.D."/>
            <person name="Lloyd P."/>
            <person name="Skrzypek M.S."/>
            <person name="Miyasato S.R."/>
            <person name="Simison M."/>
            <person name="Cherry J.M."/>
        </authorList>
    </citation>
    <scope>GENOME REANNOTATION</scope>
    <scope>SEQUENCE REVISION TO 752</scope>
    <source>
        <strain>ATCC 204508 / S288c</strain>
    </source>
</reference>
<reference key="4">
    <citation type="journal article" date="1997" name="Genetics">
        <title>DMC1 functions in a Saccharomyces cerevisiae meiotic pathway that is largely independent of the RAD51 pathway.</title>
        <authorList>
            <person name="Dresser M.E."/>
            <person name="Ewing D.J."/>
            <person name="Conrad M.N."/>
            <person name="Dominguez A.M."/>
            <person name="Barstead R."/>
            <person name="Jiang H."/>
            <person name="Kodadek T."/>
        </authorList>
    </citation>
    <scope>INTERACTION WITH DMC1</scope>
</reference>
<reference key="5">
    <citation type="journal article" date="1997" name="Genetics">
        <title>RDH54, a RAD54 homologue in Saccharomyces cerevisiae, is required for mitotic diploid-specific recombination and repair and for meiosis.</title>
        <authorList>
            <person name="Klein H.L."/>
        </authorList>
    </citation>
    <scope>FUNCTION</scope>
</reference>
<reference key="6">
    <citation type="journal article" date="1997" name="Genetics">
        <title>Characterization of the roles of the Saccharomyces cerevisiae RAD54 gene and a homologue of RAD54, RDH54/TID1, in mitosis and meiosis.</title>
        <authorList>
            <person name="Shinohara M."/>
            <person name="Shita-Yamaguchi E."/>
            <person name="Buerstedde J.-M."/>
            <person name="Shinagawa H."/>
            <person name="Ogawa H."/>
            <person name="Shinohara A."/>
        </authorList>
    </citation>
    <scope>FUNCTION</scope>
</reference>
<reference key="7">
    <citation type="journal article" date="2000" name="Genes Dev.">
        <title>Promotion of Rad51-dependent D-loop formation by yeast recombination factor Rdh54/Tid1.</title>
        <authorList>
            <person name="Petukhova G."/>
            <person name="Sung P."/>
            <person name="Klein H."/>
        </authorList>
    </citation>
    <scope>FUNCTION</scope>
    <scope>CATALYTIC ACTIVITY</scope>
    <scope>INTERACTION WITH RAD51</scope>
    <scope>MUTAGENESIS OF LYS-352</scope>
</reference>
<reference key="8">
    <citation type="journal article" date="2000" name="Proc. Natl. Acad. Sci. U.S.A.">
        <title>Tid1/Rdh54 promotes colocalization of Rad51 and Dmc1 during meiotic recombination.</title>
        <authorList>
            <person name="Shinohara M."/>
            <person name="Gasior S.L."/>
            <person name="Bishop D.K."/>
            <person name="Shinohara A."/>
        </authorList>
    </citation>
    <scope>FUNCTION</scope>
</reference>
<reference key="9">
    <citation type="journal article" date="2001" name="Curr. Biol.">
        <title>The Saccharomyces recombination protein Tid1p is required for adaptation from G2/M arrest induced by a double-strand break.</title>
        <authorList>
            <person name="Lee S.E."/>
            <person name="Pellicioli A."/>
            <person name="Malkova A."/>
            <person name="Foiani M."/>
            <person name="Haber J.E."/>
        </authorList>
    </citation>
    <scope>FUNCTION</scope>
</reference>
<reference key="10">
    <citation type="journal article" date="2003" name="Genetics">
        <title>Crossover interference in Saccharomyces cerevisiae requires a TID1/RDH54- and DMC1-dependent pathway.</title>
        <authorList>
            <person name="Shinohara M."/>
            <person name="Sakai K."/>
            <person name="Shinohara A."/>
            <person name="Bishop D.K."/>
        </authorList>
    </citation>
    <scope>FUNCTION</scope>
</reference>
<reference key="11">
    <citation type="journal article" date="2003" name="Nature">
        <title>Sequencing and comparison of yeast species to identify genes and regulatory elements.</title>
        <authorList>
            <person name="Kellis M."/>
            <person name="Patterson N."/>
            <person name="Endrizzi M."/>
            <person name="Birren B.W."/>
            <person name="Lander E.S."/>
        </authorList>
    </citation>
    <scope>IDENTIFICATION OF PROBABLE INITIATION SITE</scope>
</reference>
<reference key="12">
    <citation type="journal article" date="2003" name="Nature">
        <title>Global analysis of protein localization in budding yeast.</title>
        <authorList>
            <person name="Huh W.-K."/>
            <person name="Falvo J.V."/>
            <person name="Gerke L.C."/>
            <person name="Carroll A.S."/>
            <person name="Howson R.W."/>
            <person name="Weissman J.S."/>
            <person name="O'Shea E.K."/>
        </authorList>
    </citation>
    <scope>SUBCELLULAR LOCATION [LARGE SCALE ANALYSIS]</scope>
</reference>
<reference key="13">
    <citation type="journal article" date="2003" name="Nature">
        <title>Global analysis of protein expression in yeast.</title>
        <authorList>
            <person name="Ghaemmaghami S."/>
            <person name="Huh W.-K."/>
            <person name="Bower K."/>
            <person name="Howson R.W."/>
            <person name="Belle A."/>
            <person name="Dephoure N."/>
            <person name="O'Shea E.K."/>
            <person name="Weissman J.S."/>
        </authorList>
    </citation>
    <scope>LEVEL OF PROTEIN EXPRESSION [LARGE SCALE ANALYSIS]</scope>
</reference>
<reference key="14">
    <citation type="journal article" date="2003" name="Science">
        <title>Finding functional features in Saccharomyces genomes by phylogenetic footprinting.</title>
        <authorList>
            <person name="Cliften P.F."/>
            <person name="Sudarsanam P."/>
            <person name="Desikan A."/>
            <person name="Fulton L."/>
            <person name="Fulton B."/>
            <person name="Majors J."/>
            <person name="Waterston R."/>
            <person name="Cohen B.A."/>
            <person name="Johnston M."/>
        </authorList>
    </citation>
    <scope>IDENTIFICATION OF PROBABLE INITIATION SITE</scope>
</reference>
<reference key="15">
    <citation type="journal article" date="2008" name="Mol. Cell. Proteomics">
        <title>A multidimensional chromatography technology for in-depth phosphoproteome analysis.</title>
        <authorList>
            <person name="Albuquerque C.P."/>
            <person name="Smolka M.B."/>
            <person name="Payne S.H."/>
            <person name="Bafna V."/>
            <person name="Eng J."/>
            <person name="Zhou H."/>
        </authorList>
    </citation>
    <scope>IDENTIFICATION BY MASS SPECTROMETRY [LARGE SCALE ANALYSIS]</scope>
</reference>
<reference key="16">
    <citation type="journal article" date="2009" name="Science">
        <title>Global analysis of Cdk1 substrate phosphorylation sites provides insights into evolution.</title>
        <authorList>
            <person name="Holt L.J."/>
            <person name="Tuch B.B."/>
            <person name="Villen J."/>
            <person name="Johnson A.D."/>
            <person name="Gygi S.P."/>
            <person name="Morgan D.O."/>
        </authorList>
    </citation>
    <scope>IDENTIFICATION BY MASS SPECTROMETRY [LARGE SCALE ANALYSIS]</scope>
</reference>
<reference key="17">
    <citation type="journal article" date="2012" name="Proteomics">
        <title>Sites of ubiquitin attachment in Saccharomyces cerevisiae.</title>
        <authorList>
            <person name="Starita L.M."/>
            <person name="Lo R.S."/>
            <person name="Eng J.K."/>
            <person name="von Haller P.D."/>
            <person name="Fields S."/>
        </authorList>
    </citation>
    <scope>UBIQUITINATION [LARGE SCALE ANALYSIS] AT LYS-649</scope>
    <scope>IDENTIFICATION BY MASS SPECTROMETRY [LARGE SCALE ANALYSIS]</scope>
</reference>
<name>RDH54_YEAST</name>
<evidence type="ECO:0000255" key="1">
    <source>
        <dbReference type="PROSITE-ProRule" id="PRU00541"/>
    </source>
</evidence>
<evidence type="ECO:0000255" key="2">
    <source>
        <dbReference type="PROSITE-ProRule" id="PRU00542"/>
    </source>
</evidence>
<evidence type="ECO:0000256" key="3">
    <source>
        <dbReference type="SAM" id="MobiDB-lite"/>
    </source>
</evidence>
<evidence type="ECO:0000269" key="4">
    <source>
    </source>
</evidence>
<evidence type="ECO:0000269" key="5">
    <source>
    </source>
</evidence>
<evidence type="ECO:0000269" key="6">
    <source>
    </source>
</evidence>
<evidence type="ECO:0000269" key="7">
    <source>
    </source>
</evidence>
<evidence type="ECO:0000269" key="8">
    <source>
    </source>
</evidence>
<evidence type="ECO:0000269" key="9">
    <source>
    </source>
</evidence>
<evidence type="ECO:0000269" key="10">
    <source>
    </source>
</evidence>
<evidence type="ECO:0000269" key="11">
    <source>
    </source>
</evidence>
<evidence type="ECO:0000269" key="12">
    <source>
    </source>
</evidence>
<evidence type="ECO:0000305" key="13"/>
<evidence type="ECO:0007744" key="14">
    <source>
    </source>
</evidence>
<keyword id="KW-0067">ATP-binding</keyword>
<keyword id="KW-0227">DNA damage</keyword>
<keyword id="KW-0233">DNA recombination</keyword>
<keyword id="KW-0234">DNA repair</keyword>
<keyword id="KW-0238">DNA-binding</keyword>
<keyword id="KW-0347">Helicase</keyword>
<keyword id="KW-0378">Hydrolase</keyword>
<keyword id="KW-1017">Isopeptide bond</keyword>
<keyword id="KW-0469">Meiosis</keyword>
<keyword id="KW-0547">Nucleotide-binding</keyword>
<keyword id="KW-0539">Nucleus</keyword>
<keyword id="KW-1185">Reference proteome</keyword>
<keyword id="KW-0832">Ubl conjugation</keyword>
<feature type="chain" id="PRO_0000074346" description="DNA repair and recombination protein RDH54">
    <location>
        <begin position="1"/>
        <end position="958"/>
    </location>
</feature>
<feature type="domain" description="Helicase ATP-binding" evidence="1">
    <location>
        <begin position="333"/>
        <end position="521"/>
    </location>
</feature>
<feature type="domain" description="Helicase C-terminal" evidence="2">
    <location>
        <begin position="665"/>
        <end position="824"/>
    </location>
</feature>
<feature type="region of interest" description="Disordered" evidence="3">
    <location>
        <begin position="189"/>
        <end position="217"/>
    </location>
</feature>
<feature type="short sequence motif" description="DEGH box">
    <location>
        <begin position="506"/>
        <end position="509"/>
    </location>
</feature>
<feature type="compositionally biased region" description="Low complexity" evidence="3">
    <location>
        <begin position="202"/>
        <end position="212"/>
    </location>
</feature>
<feature type="binding site" evidence="1">
    <location>
        <begin position="380"/>
        <end position="387"/>
    </location>
    <ligand>
        <name>ATP</name>
        <dbReference type="ChEBI" id="CHEBI:30616"/>
    </ligand>
</feature>
<feature type="cross-link" description="Glycyl lysine isopeptide (Lys-Gly) (interchain with G-Cter in ubiquitin)" evidence="14">
    <location>
        <position position="649"/>
    </location>
</feature>
<feature type="mutagenesis site" description="1%-2% of the ATPase activity." evidence="4">
    <original>K</original>
    <variation>R</variation>
    <location>
        <position position="352"/>
    </location>
</feature>
<feature type="sequence conflict" description="In Ref. 1; CAA53930 and 2; CAA85017." evidence="13" ref="1 2">
    <original>A</original>
    <variation>R</variation>
    <location>
        <position position="752"/>
    </location>
</feature>
<proteinExistence type="evidence at protein level"/>
<gene>
    <name type="primary">RDH54</name>
    <name type="synonym">TID1</name>
    <name type="ordered locus">YBR073W</name>
    <name type="ORF">YBR0715</name>
</gene>
<sequence>MAVISVKPRRREKILQEVKNSSVYQTVFDSGTTQMQIPKYENKPFKPPRRVGSNKYTQLKPTATAVTTAPISKAKVTVNLKRSISAGPTLNLAKKPNNLSSNENTRYFTIMYRKPTTKKHKTWSGDGYATLKASSDKLCFYNEAGKFLGSSMLPSDSDSLFETLFKAGSNEVQLDYELKENAEIRSAKEALSQNMGNPSPPTTSTTETVPSTKNDGGKYQMPLSQLFSLNTVKRFKSVTKQTNEHMTTVPKTSQNSKAKKYYPVFDVNKIDNPIVMNKNAAAEVDVIVDPLLGKFLRPHQREGVKFMYDCLMGLARPTIENPDIDCTTKSLVLENDSDISGCLLADDMGLGKTLMSITLIWTLIRQTPFASKVSCSQSGIPLTGLCKKILVVCPVTLIGNWKREFGKWLNLSRIGVLTLSSRNSPDMDKMAVRNFLKVQRTYQVLIIGYEKLLSVSEELEKNKHLIDMLVCDEGHRLKNGASKILNTLKSLDIRRKLLLTGTPIQNDLNEFFTIIDFINPGILGSFASFKRRFIIPITRARDTANRYNEELLEKGEERSKEMIEITKRFILRRTNAILEKYLPPKTDIILFCKPYSQQILAFKDILQGARLDFGQLTFSSSLGLITLLKKVCNSPGLVGSDPYYKSHIKDTQSQDSYSRSLNSGKLKVLMTLLEGIRKGTKEKVVVVSNYTQTLDIIENLMNMAGMSHCRLDGSIPAKQRDSIVTSFNRNPAIFGFLLSAKSGGVGLNLVGASRLILFDNDWNPSVDLQAMSRIHRDGQKKPCFIYRLVTTGCIDEKILQRQLMKNSLSQKFLGDSEMRNKESSNDDLFNKEDLKDLFSVHTDTKSNTHDLICSCDGLGEEIEYPETNQQQNTVELRKRSTTTWTSALDLQKKMNEAATNDDAKKSQYIRQCLVHYKHIDPARQDELFDEVITDSFTELKDSITFAFVKPGEICLREQ</sequence>
<protein>
    <recommendedName>
        <fullName>DNA repair and recombination protein RDH54</fullName>
        <ecNumber evidence="4">3.6.4.12</ecNumber>
    </recommendedName>
    <alternativeName>
        <fullName>RAD homolog 54</fullName>
    </alternativeName>
    <alternativeName>
        <fullName>Recombination factor TID1</fullName>
    </alternativeName>
    <alternativeName>
        <fullName>Two hybrid interaction with DMC1 protein 1</fullName>
    </alternativeName>
</protein>
<organism>
    <name type="scientific">Saccharomyces cerevisiae (strain ATCC 204508 / S288c)</name>
    <name type="common">Baker's yeast</name>
    <dbReference type="NCBI Taxonomy" id="559292"/>
    <lineage>
        <taxon>Eukaryota</taxon>
        <taxon>Fungi</taxon>
        <taxon>Dikarya</taxon>
        <taxon>Ascomycota</taxon>
        <taxon>Saccharomycotina</taxon>
        <taxon>Saccharomycetes</taxon>
        <taxon>Saccharomycetales</taxon>
        <taxon>Saccharomycetaceae</taxon>
        <taxon>Saccharomyces</taxon>
    </lineage>
</organism>
<dbReference type="EC" id="3.6.4.12" evidence="4"/>
<dbReference type="EMBL" id="X76294">
    <property type="protein sequence ID" value="CAA53930.1"/>
    <property type="molecule type" value="Genomic_DNA"/>
</dbReference>
<dbReference type="EMBL" id="Z35942">
    <property type="protein sequence ID" value="CAA85017.1"/>
    <property type="molecule type" value="Genomic_DNA"/>
</dbReference>
<dbReference type="EMBL" id="BK006936">
    <property type="protein sequence ID" value="DAA07193.2"/>
    <property type="molecule type" value="Genomic_DNA"/>
</dbReference>
<dbReference type="PIR" id="S45466">
    <property type="entry name" value="S45466"/>
</dbReference>
<dbReference type="RefSeq" id="NP_009629.6">
    <property type="nucleotide sequence ID" value="NM_001178421.4"/>
</dbReference>
<dbReference type="SMR" id="P38086"/>
<dbReference type="BioGRID" id="32776">
    <property type="interactions" value="166"/>
</dbReference>
<dbReference type="DIP" id="DIP-792N"/>
<dbReference type="FunCoup" id="P38086">
    <property type="interactions" value="79"/>
</dbReference>
<dbReference type="IntAct" id="P38086">
    <property type="interactions" value="23"/>
</dbReference>
<dbReference type="MINT" id="P38086"/>
<dbReference type="STRING" id="4932.YBR073W"/>
<dbReference type="CarbonylDB" id="P38086"/>
<dbReference type="iPTMnet" id="P38086"/>
<dbReference type="PaxDb" id="4932-YBR073W"/>
<dbReference type="PeptideAtlas" id="P38086"/>
<dbReference type="EnsemblFungi" id="YBR073W_mRNA">
    <property type="protein sequence ID" value="YBR073W"/>
    <property type="gene ID" value="YBR073W"/>
</dbReference>
<dbReference type="GeneID" id="852365"/>
<dbReference type="KEGG" id="sce:YBR073W"/>
<dbReference type="AGR" id="SGD:S000000277"/>
<dbReference type="SGD" id="S000000277">
    <property type="gene designation" value="RDH54"/>
</dbReference>
<dbReference type="VEuPathDB" id="FungiDB:YBR073W"/>
<dbReference type="eggNOG" id="KOG0390">
    <property type="taxonomic scope" value="Eukaryota"/>
</dbReference>
<dbReference type="GeneTree" id="ENSGT00940000156966"/>
<dbReference type="HOGENOM" id="CLU_000315_10_1_1"/>
<dbReference type="InParanoid" id="P38086"/>
<dbReference type="OMA" id="FTIMYRK"/>
<dbReference type="OrthoDB" id="413460at2759"/>
<dbReference type="BioCyc" id="YEAST:G3O-29042-MONOMER"/>
<dbReference type="BioGRID-ORCS" id="852365">
    <property type="hits" value="0 hits in 10 CRISPR screens"/>
</dbReference>
<dbReference type="PRO" id="PR:P38086"/>
<dbReference type="Proteomes" id="UP000002311">
    <property type="component" value="Chromosome II"/>
</dbReference>
<dbReference type="RNAct" id="P38086">
    <property type="molecule type" value="protein"/>
</dbReference>
<dbReference type="GO" id="GO:0005634">
    <property type="term" value="C:nucleus"/>
    <property type="evidence" value="ECO:0000318"/>
    <property type="project" value="GO_Central"/>
</dbReference>
<dbReference type="GO" id="GO:0005524">
    <property type="term" value="F:ATP binding"/>
    <property type="evidence" value="ECO:0007669"/>
    <property type="project" value="UniProtKB-KW"/>
</dbReference>
<dbReference type="GO" id="GO:0016887">
    <property type="term" value="F:ATP hydrolysis activity"/>
    <property type="evidence" value="ECO:0007669"/>
    <property type="project" value="RHEA"/>
</dbReference>
<dbReference type="GO" id="GO:0008094">
    <property type="term" value="F:ATP-dependent activity, acting on DNA"/>
    <property type="evidence" value="ECO:0000314"/>
    <property type="project" value="SGD"/>
</dbReference>
<dbReference type="GO" id="GO:0015616">
    <property type="term" value="F:DNA translocase activity"/>
    <property type="evidence" value="ECO:0000314"/>
    <property type="project" value="SGD"/>
</dbReference>
<dbReference type="GO" id="GO:0003690">
    <property type="term" value="F:double-stranded DNA binding"/>
    <property type="evidence" value="ECO:0000314"/>
    <property type="project" value="SGD"/>
</dbReference>
<dbReference type="GO" id="GO:0004386">
    <property type="term" value="F:helicase activity"/>
    <property type="evidence" value="ECO:0007669"/>
    <property type="project" value="UniProtKB-KW"/>
</dbReference>
<dbReference type="GO" id="GO:0032392">
    <property type="term" value="P:DNA geometric change"/>
    <property type="evidence" value="ECO:0000314"/>
    <property type="project" value="SGD"/>
</dbReference>
<dbReference type="GO" id="GO:0006310">
    <property type="term" value="P:DNA recombination"/>
    <property type="evidence" value="ECO:0000315"/>
    <property type="project" value="SGD"/>
</dbReference>
<dbReference type="GO" id="GO:0006281">
    <property type="term" value="P:DNA repair"/>
    <property type="evidence" value="ECO:0000315"/>
    <property type="project" value="SGD"/>
</dbReference>
<dbReference type="GO" id="GO:0000724">
    <property type="term" value="P:double-strand break repair via homologous recombination"/>
    <property type="evidence" value="ECO:0000318"/>
    <property type="project" value="GO_Central"/>
</dbReference>
<dbReference type="GO" id="GO:0030491">
    <property type="term" value="P:heteroduplex formation"/>
    <property type="evidence" value="ECO:0000314"/>
    <property type="project" value="SGD"/>
</dbReference>
<dbReference type="GO" id="GO:0045144">
    <property type="term" value="P:meiotic sister chromatid segregation"/>
    <property type="evidence" value="ECO:0000315"/>
    <property type="project" value="SGD"/>
</dbReference>
<dbReference type="GO" id="GO:0007131">
    <property type="term" value="P:reciprocal meiotic recombination"/>
    <property type="evidence" value="ECO:0000315"/>
    <property type="project" value="SGD"/>
</dbReference>
<dbReference type="CDD" id="cd18004">
    <property type="entry name" value="DEXHc_RAD54"/>
    <property type="match status" value="1"/>
</dbReference>
<dbReference type="CDD" id="cd18793">
    <property type="entry name" value="SF2_C_SNF"/>
    <property type="match status" value="1"/>
</dbReference>
<dbReference type="FunFam" id="3.40.50.10810:FF:000058">
    <property type="entry name" value="RDH54p DNA-dependent ATPase"/>
    <property type="match status" value="1"/>
</dbReference>
<dbReference type="Gene3D" id="3.40.50.300">
    <property type="entry name" value="P-loop containing nucleotide triphosphate hydrolases"/>
    <property type="match status" value="1"/>
</dbReference>
<dbReference type="Gene3D" id="1.20.120.850">
    <property type="entry name" value="SWI2/SNF2 ATPases, N-terminal domain"/>
    <property type="match status" value="1"/>
</dbReference>
<dbReference type="Gene3D" id="3.40.50.10810">
    <property type="entry name" value="Tandem AAA-ATPase domain"/>
    <property type="match status" value="1"/>
</dbReference>
<dbReference type="InterPro" id="IPR014001">
    <property type="entry name" value="Helicase_ATP-bd"/>
</dbReference>
<dbReference type="InterPro" id="IPR001650">
    <property type="entry name" value="Helicase_C-like"/>
</dbReference>
<dbReference type="InterPro" id="IPR027417">
    <property type="entry name" value="P-loop_NTPase"/>
</dbReference>
<dbReference type="InterPro" id="IPR038718">
    <property type="entry name" value="SNF2-like_sf"/>
</dbReference>
<dbReference type="InterPro" id="IPR049730">
    <property type="entry name" value="SNF2/RAD54-like_C"/>
</dbReference>
<dbReference type="InterPro" id="IPR000330">
    <property type="entry name" value="SNF2_N"/>
</dbReference>
<dbReference type="InterPro" id="IPR050496">
    <property type="entry name" value="SNF2_RAD54_helicase_repair"/>
</dbReference>
<dbReference type="PANTHER" id="PTHR45629:SF7">
    <property type="entry name" value="DNA EXCISION REPAIR PROTEIN ERCC-6-RELATED"/>
    <property type="match status" value="1"/>
</dbReference>
<dbReference type="PANTHER" id="PTHR45629">
    <property type="entry name" value="SNF2/RAD54 FAMILY MEMBER"/>
    <property type="match status" value="1"/>
</dbReference>
<dbReference type="Pfam" id="PF00271">
    <property type="entry name" value="Helicase_C"/>
    <property type="match status" value="1"/>
</dbReference>
<dbReference type="Pfam" id="PF00176">
    <property type="entry name" value="SNF2-rel_dom"/>
    <property type="match status" value="1"/>
</dbReference>
<dbReference type="SMART" id="SM00487">
    <property type="entry name" value="DEXDc"/>
    <property type="match status" value="1"/>
</dbReference>
<dbReference type="SMART" id="SM00490">
    <property type="entry name" value="HELICc"/>
    <property type="match status" value="1"/>
</dbReference>
<dbReference type="SUPFAM" id="SSF52540">
    <property type="entry name" value="P-loop containing nucleoside triphosphate hydrolases"/>
    <property type="match status" value="2"/>
</dbReference>
<dbReference type="PROSITE" id="PS51192">
    <property type="entry name" value="HELICASE_ATP_BIND_1"/>
    <property type="match status" value="1"/>
</dbReference>
<dbReference type="PROSITE" id="PS51194">
    <property type="entry name" value="HELICASE_CTER"/>
    <property type="match status" value="1"/>
</dbReference>